<organism>
    <name type="scientific">Escherichia coli (strain K12)</name>
    <dbReference type="NCBI Taxonomy" id="83333"/>
    <lineage>
        <taxon>Bacteria</taxon>
        <taxon>Pseudomonadati</taxon>
        <taxon>Pseudomonadota</taxon>
        <taxon>Gammaproteobacteria</taxon>
        <taxon>Enterobacterales</taxon>
        <taxon>Enterobacteriaceae</taxon>
        <taxon>Escherichia</taxon>
    </lineage>
</organism>
<feature type="chain" id="PRO_0000394138" description="Putative transposase InsL for insertion sequence element IS186C">
    <location>
        <begin position="1"/>
        <end position="370"/>
    </location>
</feature>
<protein>
    <recommendedName>
        <fullName>Putative transposase InsL for insertion sequence element IS186C</fullName>
    </recommendedName>
</protein>
<reference key="1">
    <citation type="journal article" date="1997" name="DNA Res.">
        <title>Construction of a contiguous 874-kb sequence of the Escherichia coli-K12 genome corresponding to 50.0-68.8 min on the linkage map and analysis of its sequence features.</title>
        <authorList>
            <person name="Yamamoto Y."/>
            <person name="Aiba H."/>
            <person name="Baba T."/>
            <person name="Hayashi K."/>
            <person name="Inada T."/>
            <person name="Isono K."/>
            <person name="Itoh T."/>
            <person name="Kimura S."/>
            <person name="Kitagawa M."/>
            <person name="Makino K."/>
            <person name="Miki T."/>
            <person name="Mitsuhashi N."/>
            <person name="Mizobuchi K."/>
            <person name="Mori H."/>
            <person name="Nakade S."/>
            <person name="Nakamura Y."/>
            <person name="Nashimoto H."/>
            <person name="Oshima T."/>
            <person name="Oyama S."/>
            <person name="Saito N."/>
            <person name="Sampei G."/>
            <person name="Satoh Y."/>
            <person name="Sivasundaram S."/>
            <person name="Tagami H."/>
            <person name="Takahashi H."/>
            <person name="Takeda J."/>
            <person name="Takemoto K."/>
            <person name="Uehara K."/>
            <person name="Wada C."/>
            <person name="Yamagata S."/>
            <person name="Horiuchi T."/>
        </authorList>
    </citation>
    <scope>NUCLEOTIDE SEQUENCE [LARGE SCALE GENOMIC DNA] (B2394)</scope>
    <source>
        <strain>K12 / W3110 / ATCC 27325 / DSM 5911</strain>
    </source>
</reference>
<reference key="2">
    <citation type="journal article" date="1997" name="Science">
        <title>The complete genome sequence of Escherichia coli K-12.</title>
        <authorList>
            <person name="Blattner F.R."/>
            <person name="Plunkett G. III"/>
            <person name="Bloch C.A."/>
            <person name="Perna N.T."/>
            <person name="Burland V."/>
            <person name="Riley M."/>
            <person name="Collado-Vides J."/>
            <person name="Glasner J.D."/>
            <person name="Rode C.K."/>
            <person name="Mayhew G.F."/>
            <person name="Gregor J."/>
            <person name="Davis N.W."/>
            <person name="Kirkpatrick H.A."/>
            <person name="Goeden M.A."/>
            <person name="Rose D.J."/>
            <person name="Mau B."/>
            <person name="Shao Y."/>
        </authorList>
    </citation>
    <scope>NUCLEOTIDE SEQUENCE [LARGE SCALE GENOMIC DNA]</scope>
    <source>
        <strain>K12 / MG1655 / ATCC 47076</strain>
    </source>
</reference>
<reference key="3">
    <citation type="journal article" date="2006" name="Mol. Syst. Biol.">
        <title>Highly accurate genome sequences of Escherichia coli K-12 strains MG1655 and W3110.</title>
        <authorList>
            <person name="Hayashi K."/>
            <person name="Morooka N."/>
            <person name="Yamamoto Y."/>
            <person name="Fujita K."/>
            <person name="Isono K."/>
            <person name="Choi S."/>
            <person name="Ohtsubo E."/>
            <person name="Baba T."/>
            <person name="Wanner B.L."/>
            <person name="Mori H."/>
            <person name="Horiuchi T."/>
        </authorList>
    </citation>
    <scope>NUCLEOTIDE SEQUENCE [LARGE SCALE GENOMIC DNA]</scope>
    <source>
        <strain>K12 / W3110 / ATCC 27325 / DSM 5911</strain>
    </source>
</reference>
<sequence length="370" mass="40909">MNYSHDNWSAILAHIGKPEELDTSARNAGALTRRREIRDAATLLRLGLAYGPGGMSLREVTAWAQLHDVATLSDVALLKRLRNAADWFGILAAQTLAVRAAVTGCTSGKRLRLVDGTAISAPGGGSAEWRLHMGYDPHTCQFTDFELTDSRDAERLDRFAQTADEIRIADRGFGSRPECIRSLAFGEADYIVRVHWRGLRWLTAEGMRFDMMGFLRGLDCGKNGETTVMIGNSGNKKAGAPFPARLIAVSLPPEKALISKTRLLSENRRKGRVVQAETLEAAGHVLLLTSLPEDEYSAEQVADCYRLRWQIELAFKRLKSLLHLDALRAKEPELAKAWIFANLLAAFLIDDIIQPSLDFPPRSAGSEKKN</sequence>
<dbReference type="EMBL" id="U00096">
    <property type="protein sequence ID" value="AAC75453.2"/>
    <property type="molecule type" value="Genomic_DNA"/>
</dbReference>
<dbReference type="EMBL" id="AP009048">
    <property type="protein sequence ID" value="BAA16264.2"/>
    <property type="molecule type" value="Genomic_DNA"/>
</dbReference>
<dbReference type="PIR" id="G65013">
    <property type="entry name" value="QQEC47"/>
</dbReference>
<dbReference type="RefSeq" id="NP_416895.2">
    <property type="nucleotide sequence ID" value="NC_000913.3"/>
</dbReference>
<dbReference type="RefSeq" id="WP_001300563.1">
    <property type="nucleotide sequence ID" value="NZ_STEB01000093.1"/>
</dbReference>
<dbReference type="DIP" id="DIP-28060N"/>
<dbReference type="FunCoup" id="P0CF93">
    <property type="interactions" value="4"/>
</dbReference>
<dbReference type="EnsemblBacteria" id="AAC75453">
    <property type="protein sequence ID" value="AAC75453"/>
    <property type="gene ID" value="b2394"/>
</dbReference>
<dbReference type="GeneID" id="946896"/>
<dbReference type="KEGG" id="ecj:JW5390"/>
<dbReference type="KEGG" id="eco:b0016"/>
<dbReference type="KEGG" id="eco:b0582"/>
<dbReference type="KEGG" id="eco:b2394"/>
<dbReference type="KEGG" id="ecoc:C3026_00080"/>
<dbReference type="KEGG" id="ecoc:C3026_02900"/>
<dbReference type="KEGG" id="ecoc:C3026_13305"/>
<dbReference type="PATRIC" id="fig|511145.12.peg.14"/>
<dbReference type="EchoBASE" id="EB4758"/>
<dbReference type="HOGENOM" id="CLU_049434_1_0_6"/>
<dbReference type="InParanoid" id="P0CF93"/>
<dbReference type="OMA" id="IVRVYWR"/>
<dbReference type="OrthoDB" id="5889367at2"/>
<dbReference type="BioCyc" id="EcoCyc:G7255-MONOMER"/>
<dbReference type="PRO" id="PR:P0CF93"/>
<dbReference type="Proteomes" id="UP000000625">
    <property type="component" value="Chromosome"/>
</dbReference>
<dbReference type="GO" id="GO:0003677">
    <property type="term" value="F:DNA binding"/>
    <property type="evidence" value="ECO:0007669"/>
    <property type="project" value="UniProtKB-KW"/>
</dbReference>
<dbReference type="GO" id="GO:0004803">
    <property type="term" value="F:transposase activity"/>
    <property type="evidence" value="ECO:0007669"/>
    <property type="project" value="InterPro"/>
</dbReference>
<dbReference type="GO" id="GO:0006313">
    <property type="term" value="P:DNA transposition"/>
    <property type="evidence" value="ECO:0007669"/>
    <property type="project" value="InterPro"/>
</dbReference>
<dbReference type="Gene3D" id="3.90.350.10">
    <property type="entry name" value="Transposase Inhibitor Protein From Tn5, Chain A, domain 1"/>
    <property type="match status" value="1"/>
</dbReference>
<dbReference type="InterPro" id="IPR012337">
    <property type="entry name" value="RNaseH-like_sf"/>
</dbReference>
<dbReference type="InterPro" id="IPR047952">
    <property type="entry name" value="Transpos_IS4"/>
</dbReference>
<dbReference type="InterPro" id="IPR002559">
    <property type="entry name" value="Transposase_11"/>
</dbReference>
<dbReference type="NCBIfam" id="NF033592">
    <property type="entry name" value="transpos_IS4_1"/>
    <property type="match status" value="1"/>
</dbReference>
<dbReference type="PANTHER" id="PTHR33258">
    <property type="entry name" value="TRANSPOSASE INSL FOR INSERTION SEQUENCE ELEMENT IS186A-RELATED"/>
    <property type="match status" value="1"/>
</dbReference>
<dbReference type="PANTHER" id="PTHR33258:SF1">
    <property type="entry name" value="TRANSPOSASE INSL FOR INSERTION SEQUENCE ELEMENT IS186A-RELATED"/>
    <property type="match status" value="1"/>
</dbReference>
<dbReference type="Pfam" id="PF01609">
    <property type="entry name" value="DDE_Tnp_1"/>
    <property type="match status" value="1"/>
</dbReference>
<dbReference type="SUPFAM" id="SSF53098">
    <property type="entry name" value="Ribonuclease H-like"/>
    <property type="match status" value="1"/>
</dbReference>
<gene>
    <name type="primary">insL3</name>
    <name type="ordered locus">b2394</name>
    <name type="ordered locus">JW5390</name>
</gene>
<accession>P0CF93</accession>
<accession>P08409</accession>
<accession>P11307</accession>
<accession>P76952</accession>
<accession>P77426</accession>
<accession>Q2MCH6</accession>
<accession>Q47051</accession>
<evidence type="ECO:0000305" key="1"/>
<name>INSL3_ECOLI</name>
<comment type="function">
    <text>Involved in the transposition of the insertion sequence IS186.</text>
</comment>
<comment type="similarity">
    <text evidence="1">Belongs to the transposase 11 family.</text>
</comment>
<keyword id="KW-0233">DNA recombination</keyword>
<keyword id="KW-0238">DNA-binding</keyword>
<keyword id="KW-1185">Reference proteome</keyword>
<keyword id="KW-0814">Transposable element</keyword>
<keyword id="KW-0815">Transposition</keyword>
<proteinExistence type="inferred from homology"/>